<organism>
    <name type="scientific">Caenorhabditis elegans</name>
    <dbReference type="NCBI Taxonomy" id="6239"/>
    <lineage>
        <taxon>Eukaryota</taxon>
        <taxon>Metazoa</taxon>
        <taxon>Ecdysozoa</taxon>
        <taxon>Nematoda</taxon>
        <taxon>Chromadorea</taxon>
        <taxon>Rhabditida</taxon>
        <taxon>Rhabditina</taxon>
        <taxon>Rhabditomorpha</taxon>
        <taxon>Rhabditoidea</taxon>
        <taxon>Rhabditidae</taxon>
        <taxon>Peloderinae</taxon>
        <taxon>Caenorhabditis</taxon>
    </lineage>
</organism>
<dbReference type="EMBL" id="FO081618">
    <property type="protein sequence ID" value="CCD72859.1"/>
    <property type="molecule type" value="Genomic_DNA"/>
</dbReference>
<dbReference type="PIR" id="B88451">
    <property type="entry name" value="B88451"/>
</dbReference>
<dbReference type="RefSeq" id="NP_498098.1">
    <property type="nucleotide sequence ID" value="NM_065697.6"/>
</dbReference>
<dbReference type="BioGRID" id="51966">
    <property type="interactions" value="10"/>
</dbReference>
<dbReference type="ComplexPortal" id="CPX-3382">
    <property type="entry name" value="Anaphase-promoting complex"/>
</dbReference>
<dbReference type="FunCoup" id="Q09410">
    <property type="interactions" value="1529"/>
</dbReference>
<dbReference type="IntAct" id="Q09410">
    <property type="interactions" value="1"/>
</dbReference>
<dbReference type="STRING" id="6239.K10D2.4.1"/>
<dbReference type="PaxDb" id="6239-K10D2.4"/>
<dbReference type="EnsemblMetazoa" id="K10D2.4.1">
    <property type="protein sequence ID" value="K10D2.4.1"/>
    <property type="gene ID" value="WBGene00019630"/>
</dbReference>
<dbReference type="GeneID" id="187262"/>
<dbReference type="KEGG" id="cel:CELE_K10D2.4"/>
<dbReference type="UCSC" id="K10D2.4">
    <property type="organism name" value="c. elegans"/>
</dbReference>
<dbReference type="AGR" id="WB:WBGene00019630"/>
<dbReference type="CTD" id="187262"/>
<dbReference type="WormBase" id="K10D2.4">
    <property type="protein sequence ID" value="CE02016"/>
    <property type="gene ID" value="WBGene00019630"/>
    <property type="gene designation" value="emb-1"/>
</dbReference>
<dbReference type="eggNOG" id="ENOG502TIC9">
    <property type="taxonomic scope" value="Eukaryota"/>
</dbReference>
<dbReference type="HOGENOM" id="CLU_2560477_0_0_1"/>
<dbReference type="InParanoid" id="Q09410"/>
<dbReference type="OMA" id="CEHRQAQ"/>
<dbReference type="OrthoDB" id="5791125at2759"/>
<dbReference type="UniPathway" id="UPA00143"/>
<dbReference type="PRO" id="PR:Q09410"/>
<dbReference type="Proteomes" id="UP000001940">
    <property type="component" value="Chromosome III"/>
</dbReference>
<dbReference type="Bgee" id="WBGene00019630">
    <property type="expression patterns" value="Expressed in embryo and 4 other cell types or tissues"/>
</dbReference>
<dbReference type="GO" id="GO:0005680">
    <property type="term" value="C:anaphase-promoting complex"/>
    <property type="evidence" value="ECO:0000303"/>
    <property type="project" value="ComplexPortal"/>
</dbReference>
<dbReference type="GO" id="GO:0031145">
    <property type="term" value="P:anaphase-promoting complex-dependent catabolic process"/>
    <property type="evidence" value="ECO:0000303"/>
    <property type="project" value="ComplexPortal"/>
</dbReference>
<dbReference type="GO" id="GO:0051301">
    <property type="term" value="P:cell division"/>
    <property type="evidence" value="ECO:0007669"/>
    <property type="project" value="UniProtKB-KW"/>
</dbReference>
<dbReference type="GO" id="GO:0051321">
    <property type="term" value="P:meiotic cell cycle"/>
    <property type="evidence" value="ECO:0007669"/>
    <property type="project" value="UniProtKB-KW"/>
</dbReference>
<dbReference type="GO" id="GO:0016567">
    <property type="term" value="P:protein ubiquitination"/>
    <property type="evidence" value="ECO:0007669"/>
    <property type="project" value="UniProtKB-UniPathway"/>
</dbReference>
<dbReference type="GO" id="GO:0051445">
    <property type="term" value="P:regulation of meiotic cell cycle"/>
    <property type="evidence" value="ECO:0000303"/>
    <property type="project" value="ComplexPortal"/>
</dbReference>
<dbReference type="GO" id="GO:0007346">
    <property type="term" value="P:regulation of mitotic cell cycle"/>
    <property type="evidence" value="ECO:0000303"/>
    <property type="project" value="ComplexPortal"/>
</dbReference>
<sequence length="81" mass="9310">MALMYPFHVAQPPLNWSEHLWVSEVSPAKESFITTICEHRQAQWDNQDLLRHLQDSVAILTREDQRHVNAVHAAANMPANP</sequence>
<proteinExistence type="evidence at protein level"/>
<protein>
    <recommendedName>
        <fullName evidence="6">Anaphase-promoting complex subunit emb-1</fullName>
    </recommendedName>
    <alternativeName>
        <fullName evidence="7">Abnormal embryogenesis protein 1</fullName>
    </alternativeName>
    <alternativeName>
        <fullName evidence="5">Anaphase-promoting complex subunit 16 homolog</fullName>
    </alternativeName>
</protein>
<evidence type="ECO:0000250" key="1">
    <source>
        <dbReference type="UniProtKB" id="Q96DE5"/>
    </source>
</evidence>
<evidence type="ECO:0000269" key="2">
    <source>
    </source>
</evidence>
<evidence type="ECO:0000269" key="3">
    <source>
    </source>
</evidence>
<evidence type="ECO:0000269" key="4">
    <source>
    </source>
</evidence>
<evidence type="ECO:0000303" key="5">
    <source>
    </source>
</evidence>
<evidence type="ECO:0000305" key="6"/>
<evidence type="ECO:0000312" key="7">
    <source>
        <dbReference type="WormBase" id="K10D2.4"/>
    </source>
</evidence>
<name>EMB1_CAEEL</name>
<comment type="function">
    <text evidence="1 2 3 4">Probable component of the anaphase promoting complex/cyclosome (APC/C), a cell cycle-regulated E3 ubiquitin ligase that controls progression through mitosis and the G1 phase of the cell cycle (PubMed:20392738). The APC/C complex acts by mediating ubiquitination and subsequent degradation of target proteins (By similarity). Developmental role in early embryogenesis and the metaphase to anaphase transition in meiosis and mitosis (PubMed:11134076, PubMed:21775471). May be required for germline proliferation (PubMed:21775471). Required for male tail development and hermaphrodite vulva formation (PubMed:21775471).</text>
</comment>
<comment type="pathway">
    <text evidence="6">Protein modification; protein ubiquitination.</text>
</comment>
<comment type="subunit">
    <text evidence="6">The APC/C is probably composed of at least 12 subunits: apc-2, apc-10, apc-11, cdc-26, emb-1, emb-27, emb-30, mat-1, mat-2, mat-3, such-1 and gfi-3.</text>
</comment>
<comment type="tissue specificity">
    <text evidence="4">Expressed in germ cells.</text>
</comment>
<comment type="disruption phenotype">
    <text evidence="3 4">RNAi-mediated knockdown is largely embryonic lethal. Fertilized eggs show a metaphase-to-anaphase transition defective (Mat) phenotype. Arrest occurs at meiosis I at the one-cell stage of embryogenesis.</text>
</comment>
<feature type="chain" id="PRO_0000065406" description="Anaphase-promoting complex subunit emb-1" evidence="6">
    <location>
        <begin position="1"/>
        <end position="81"/>
    </location>
</feature>
<feature type="mutagenesis site" description="In hc57 and hc62; temperature sensitive mutants with no visible phenotype at 16 degrees Celsius, but mutants arrest at metaphase of meiosis I at 24 degrees Celsius." evidence="4">
    <original>E</original>
    <variation>K</variation>
    <location>
        <position position="30"/>
    </location>
</feature>
<accession>Q09410</accession>
<gene>
    <name evidence="7" type="primary">emb-1</name>
    <name evidence="7" type="synonym">apc-16</name>
    <name evidence="7" type="ORF">K10D2.4</name>
</gene>
<reference key="1">
    <citation type="journal article" date="1998" name="Science">
        <title>Genome sequence of the nematode C. elegans: a platform for investigating biology.</title>
        <authorList>
            <consortium name="The C. elegans sequencing consortium"/>
        </authorList>
    </citation>
    <scope>NUCLEOTIDE SEQUENCE [LARGE SCALE GENOMIC DNA]</scope>
    <source>
        <strain>Bristol N2</strain>
    </source>
</reference>
<reference key="2">
    <citation type="journal article" date="2000" name="J. Cell Biol.">
        <title>Metaphase to anaphase (mat) transition-defective mutants in Caenorhabditis elegans.</title>
        <authorList>
            <person name="Golden A."/>
            <person name="Sadler P.L."/>
            <person name="Wallenfang M.R."/>
            <person name="Schumacher J.M."/>
            <person name="Hamill D.R."/>
            <person name="Bates G."/>
            <person name="Bowerman B."/>
            <person name="Seydoux G."/>
            <person name="Shakes D.C."/>
        </authorList>
    </citation>
    <scope>FUNCTION</scope>
</reference>
<reference key="3">
    <citation type="journal article" date="2010" name="J. Cell Sci.">
        <title>APC16 is a conserved subunit of the anaphase-promoting complex/cyclosome.</title>
        <authorList>
            <person name="Kops G.J."/>
            <person name="van der Voet M."/>
            <person name="van der Voet M."/>
            <person name="Manak M.S."/>
            <person name="van Osch M.H."/>
            <person name="Naini S.M."/>
            <person name="Brear A."/>
            <person name="McLeod I.X."/>
            <person name="Hentschel D.M."/>
            <person name="Yates J.R."/>
            <person name="van den Heuvel S."/>
            <person name="Shah J.V."/>
        </authorList>
    </citation>
    <scope>FUNCTION</scope>
    <scope>DISRUPTION PHENOTYPE</scope>
</reference>
<reference key="4">
    <citation type="journal article" date="2011" name="Genetics">
        <title>emb-1 encodes the APC16 subunit of the Caenorhabditis elegans anaphase-promoting complex.</title>
        <authorList>
            <person name="Shakes D.C."/>
            <person name="Allen A.K."/>
            <person name="Albert K.M."/>
            <person name="Golden A."/>
        </authorList>
    </citation>
    <scope>FUNCTION</scope>
    <scope>SUBUNIT</scope>
    <scope>TISSUE SPECIFICITY</scope>
    <scope>DISRUPTION PHENOTYPE</scope>
    <scope>MUTAGENESIS OF GLU-30</scope>
</reference>
<keyword id="KW-0131">Cell cycle</keyword>
<keyword id="KW-0132">Cell division</keyword>
<keyword id="KW-0217">Developmental protein</keyword>
<keyword id="KW-0469">Meiosis</keyword>
<keyword id="KW-0498">Mitosis</keyword>
<keyword id="KW-1185">Reference proteome</keyword>
<keyword id="KW-0833">Ubl conjugation pathway</keyword>